<evidence type="ECO:0000255" key="1"/>
<evidence type="ECO:0000256" key="2">
    <source>
        <dbReference type="SAM" id="MobiDB-lite"/>
    </source>
</evidence>
<evidence type="ECO:0000305" key="3"/>
<evidence type="ECO:0000312" key="4">
    <source>
        <dbReference type="HGNC" id="HGNC:53639"/>
    </source>
</evidence>
<organism>
    <name type="scientific">Homo sapiens</name>
    <name type="common">Human</name>
    <dbReference type="NCBI Taxonomy" id="9606"/>
    <lineage>
        <taxon>Eukaryota</taxon>
        <taxon>Metazoa</taxon>
        <taxon>Chordata</taxon>
        <taxon>Craniata</taxon>
        <taxon>Vertebrata</taxon>
        <taxon>Euteleostomi</taxon>
        <taxon>Mammalia</taxon>
        <taxon>Eutheria</taxon>
        <taxon>Euarchontoglires</taxon>
        <taxon>Primates</taxon>
        <taxon>Haplorrhini</taxon>
        <taxon>Catarrhini</taxon>
        <taxon>Hominidae</taxon>
        <taxon>Homo</taxon>
    </lineage>
</organism>
<name>TM271_HUMAN</name>
<accession>A0A286YF58</accession>
<feature type="chain" id="PRO_5011637010" description="Transmembrane protein 271" evidence="1">
    <location>
        <begin position="1"/>
        <end position="385"/>
    </location>
</feature>
<feature type="transmembrane region" description="Helical" evidence="1">
    <location>
        <begin position="9"/>
        <end position="29"/>
    </location>
</feature>
<feature type="transmembrane region" description="Helical" evidence="1">
    <location>
        <begin position="50"/>
        <end position="70"/>
    </location>
</feature>
<feature type="transmembrane region" description="Helical" evidence="1">
    <location>
        <begin position="121"/>
        <end position="141"/>
    </location>
</feature>
<feature type="transmembrane region" description="Helical" evidence="1">
    <location>
        <begin position="219"/>
        <end position="239"/>
    </location>
</feature>
<feature type="region of interest" description="Disordered" evidence="2">
    <location>
        <begin position="83"/>
        <end position="111"/>
    </location>
</feature>
<feature type="region of interest" description="Disordered" evidence="2">
    <location>
        <begin position="160"/>
        <end position="203"/>
    </location>
</feature>
<feature type="region of interest" description="Disordered" evidence="2">
    <location>
        <begin position="245"/>
        <end position="305"/>
    </location>
</feature>
<feature type="compositionally biased region" description="Low complexity" evidence="2">
    <location>
        <begin position="163"/>
        <end position="197"/>
    </location>
</feature>
<feature type="compositionally biased region" description="Basic residues" evidence="2">
    <location>
        <begin position="246"/>
        <end position="258"/>
    </location>
</feature>
<feature type="compositionally biased region" description="Low complexity" evidence="2">
    <location>
        <begin position="259"/>
        <end position="277"/>
    </location>
</feature>
<feature type="compositionally biased region" description="Basic residues" evidence="2">
    <location>
        <begin position="278"/>
        <end position="292"/>
    </location>
</feature>
<dbReference type="EMBL" id="AC116565">
    <property type="status" value="NOT_ANNOTATED_CDS"/>
    <property type="molecule type" value="Genomic_DNA"/>
</dbReference>
<dbReference type="CCDS" id="CCDS93458.1"/>
<dbReference type="RefSeq" id="NP_001349725.1">
    <property type="nucleotide sequence ID" value="NM_001362796.2"/>
</dbReference>
<dbReference type="SMR" id="A0A286YF58"/>
<dbReference type="GlyGen" id="A0A286YF58">
    <property type="glycosylation" value="4 sites, 1 O-linked glycan (2 sites)"/>
</dbReference>
<dbReference type="BioMuta" id="ENSG00000273238"/>
<dbReference type="MassIVE" id="A0A286YF58"/>
<dbReference type="PeptideAtlas" id="A0A286YF58"/>
<dbReference type="Ensembl" id="ENST00000610212.3">
    <property type="protein sequence ID" value="ENSP00000493161.1"/>
    <property type="gene ID" value="ENSG00000273238.3"/>
</dbReference>
<dbReference type="GeneID" id="112441426"/>
<dbReference type="MANE-Select" id="ENST00000610212.3">
    <property type="protein sequence ID" value="ENSP00000493161.1"/>
    <property type="RefSeq nucleotide sequence ID" value="NM_001362796.2"/>
    <property type="RefSeq protein sequence ID" value="NP_001349725.1"/>
</dbReference>
<dbReference type="AGR" id="HGNC:53639"/>
<dbReference type="GeneCards" id="TMEM271"/>
<dbReference type="HGNC" id="HGNC:53639">
    <property type="gene designation" value="TMEM271"/>
</dbReference>
<dbReference type="HPA" id="ENSG00000273238">
    <property type="expression patterns" value="Group enriched (brain, skin)"/>
</dbReference>
<dbReference type="neXtProt" id="NX_A0A286YF58"/>
<dbReference type="OpenTargets" id="ENSG00000273238"/>
<dbReference type="VEuPathDB" id="HostDB:ENSG00000273238"/>
<dbReference type="GeneTree" id="ENSGT00730000114722"/>
<dbReference type="InParanoid" id="A0A286YF58"/>
<dbReference type="OMA" id="EVHCGGH"/>
<dbReference type="OrthoDB" id="8807761at2759"/>
<dbReference type="PAN-GO" id="A0A286YF58">
    <property type="GO annotations" value="0 GO annotations based on evolutionary models"/>
</dbReference>
<dbReference type="Pharos" id="A0A286YF58">
    <property type="development level" value="Tdark"/>
</dbReference>
<dbReference type="PRO" id="PR:A0A286YF58"/>
<dbReference type="Proteomes" id="UP000005640">
    <property type="component" value="Chromosome 4"/>
</dbReference>
<dbReference type="Bgee" id="ENSG00000273238">
    <property type="expression patterns" value="Expressed in male germ line stem cell (sensu Vertebrata) in testis and 43 other cell types or tissues"/>
</dbReference>
<dbReference type="GO" id="GO:0016020">
    <property type="term" value="C:membrane"/>
    <property type="evidence" value="ECO:0007669"/>
    <property type="project" value="UniProtKB-SubCell"/>
</dbReference>
<sequence length="385" mass="39128">MKWSVRGACAALSSCLLLACALSAAAVGLKCFSLGSELRGEPFRLGAAAGAFYSGLLLAAGLSLLGAALLCCGPRDAPLAGSEPGPGLGVPAAPAGAPEATPGESGAAAGAPGPVSSQNLLLLGVLVFMLGVLSAFAGAVIDGDTVSLVERKYSHYCLPPRAPGSSPGSAPGSTPGSAPGSAPGSAPGSAPGAPRARSTLDSATSAKCRQLKDYQRGLVLSTVFNSLECLLGLLSLLLVKNYKSSQARRGRRGRRRGGRALARPRGGSGLRAQPPASRARRGRRGRRGRRLQQRPSEASILSPEESDLAAPGDCAGFAAHHAVSYINVGVLHALDEAGAEVRCGGHPSVELPGYAPSDPDLNASYPYCCRPPCETPRPWETHRAC</sequence>
<keyword id="KW-0472">Membrane</keyword>
<keyword id="KW-1267">Proteomics identification</keyword>
<keyword id="KW-1185">Reference proteome</keyword>
<keyword id="KW-0812">Transmembrane</keyword>
<keyword id="KW-1133">Transmembrane helix</keyword>
<proteinExistence type="evidence at protein level"/>
<protein>
    <recommendedName>
        <fullName evidence="3">Transmembrane protein 271</fullName>
    </recommendedName>
</protein>
<gene>
    <name evidence="4" type="primary">TMEM271</name>
</gene>
<reference key="1">
    <citation type="journal article" date="2005" name="Nature">
        <title>Generation and annotation of the DNA sequences of human chromosomes 2 and 4.</title>
        <authorList>
            <person name="Hillier L.W."/>
            <person name="Graves T.A."/>
            <person name="Fulton R.S."/>
            <person name="Fulton L.A."/>
            <person name="Pepin K.H."/>
            <person name="Minx P."/>
            <person name="Wagner-McPherson C."/>
            <person name="Layman D."/>
            <person name="Wylie K."/>
            <person name="Sekhon M."/>
            <person name="Becker M.C."/>
            <person name="Fewell G.A."/>
            <person name="Delehaunty K.D."/>
            <person name="Miner T.L."/>
            <person name="Nash W.E."/>
            <person name="Kremitzki C."/>
            <person name="Oddy L."/>
            <person name="Du H."/>
            <person name="Sun H."/>
            <person name="Bradshaw-Cordum H."/>
            <person name="Ali J."/>
            <person name="Carter J."/>
            <person name="Cordes M."/>
            <person name="Harris A."/>
            <person name="Isak A."/>
            <person name="van Brunt A."/>
            <person name="Nguyen C."/>
            <person name="Du F."/>
            <person name="Courtney L."/>
            <person name="Kalicki J."/>
            <person name="Ozersky P."/>
            <person name="Abbott S."/>
            <person name="Armstrong J."/>
            <person name="Belter E.A."/>
            <person name="Caruso L."/>
            <person name="Cedroni M."/>
            <person name="Cotton M."/>
            <person name="Davidson T."/>
            <person name="Desai A."/>
            <person name="Elliott G."/>
            <person name="Erb T."/>
            <person name="Fronick C."/>
            <person name="Gaige T."/>
            <person name="Haakenson W."/>
            <person name="Haglund K."/>
            <person name="Holmes A."/>
            <person name="Harkins R."/>
            <person name="Kim K."/>
            <person name="Kruchowski S.S."/>
            <person name="Strong C.M."/>
            <person name="Grewal N."/>
            <person name="Goyea E."/>
            <person name="Hou S."/>
            <person name="Levy A."/>
            <person name="Martinka S."/>
            <person name="Mead K."/>
            <person name="McLellan M.D."/>
            <person name="Meyer R."/>
            <person name="Randall-Maher J."/>
            <person name="Tomlinson C."/>
            <person name="Dauphin-Kohlberg S."/>
            <person name="Kozlowicz-Reilly A."/>
            <person name="Shah N."/>
            <person name="Swearengen-Shahid S."/>
            <person name="Snider J."/>
            <person name="Strong J.T."/>
            <person name="Thompson J."/>
            <person name="Yoakum M."/>
            <person name="Leonard S."/>
            <person name="Pearman C."/>
            <person name="Trani L."/>
            <person name="Radionenko M."/>
            <person name="Waligorski J.E."/>
            <person name="Wang C."/>
            <person name="Rock S.M."/>
            <person name="Tin-Wollam A.-M."/>
            <person name="Maupin R."/>
            <person name="Latreille P."/>
            <person name="Wendl M.C."/>
            <person name="Yang S.-P."/>
            <person name="Pohl C."/>
            <person name="Wallis J.W."/>
            <person name="Spieth J."/>
            <person name="Bieri T.A."/>
            <person name="Berkowicz N."/>
            <person name="Nelson J.O."/>
            <person name="Osborne J."/>
            <person name="Ding L."/>
            <person name="Meyer R."/>
            <person name="Sabo A."/>
            <person name="Shotland Y."/>
            <person name="Sinha P."/>
            <person name="Wohldmann P.E."/>
            <person name="Cook L.L."/>
            <person name="Hickenbotham M.T."/>
            <person name="Eldred J."/>
            <person name="Williams D."/>
            <person name="Jones T.A."/>
            <person name="She X."/>
            <person name="Ciccarelli F.D."/>
            <person name="Izaurralde E."/>
            <person name="Taylor J."/>
            <person name="Schmutz J."/>
            <person name="Myers R.M."/>
            <person name="Cox D.R."/>
            <person name="Huang X."/>
            <person name="McPherson J.D."/>
            <person name="Mardis E.R."/>
            <person name="Clifton S.W."/>
            <person name="Warren W.C."/>
            <person name="Chinwalla A.T."/>
            <person name="Eddy S.R."/>
            <person name="Marra M.A."/>
            <person name="Ovcharenko I."/>
            <person name="Furey T.S."/>
            <person name="Miller W."/>
            <person name="Eichler E.E."/>
            <person name="Bork P."/>
            <person name="Suyama M."/>
            <person name="Torrents D."/>
            <person name="Waterston R.H."/>
            <person name="Wilson R.K."/>
        </authorList>
    </citation>
    <scope>NUCLEOTIDE SEQUENCE [LARGE SCALE GENOMIC DNA]</scope>
</reference>
<comment type="subcellular location">
    <subcellularLocation>
        <location evidence="1">Membrane</location>
        <topology evidence="1">Multi-pass membrane protein</topology>
    </subcellularLocation>
</comment>